<accession>P0DUS2</accession>
<feature type="signal peptide" evidence="1">
    <location>
        <begin position="1"/>
        <end position="22"/>
    </location>
</feature>
<feature type="peptide" id="PRO_0000453398" description="Z-limacoditoxin(1)-Dv1" evidence="1">
    <location>
        <begin position="23"/>
        <end position="32"/>
    </location>
</feature>
<feature type="modified residue" description="Pyrrolidone carboxylic acid" evidence="1">
    <location>
        <position position="23"/>
    </location>
</feature>
<feature type="modified residue" description="Proline amide" evidence="1">
    <location>
        <position position="32"/>
    </location>
</feature>
<protein>
    <recommendedName>
        <fullName evidence="2">Z-limacoditoxin(1)-Dv1</fullName>
        <shortName evidence="2">Z-LCTX(1)-Dv1</shortName>
    </recommendedName>
    <alternativeName>
        <fullName evidence="2">Vulnericin</fullName>
    </alternativeName>
</protein>
<proteinExistence type="evidence at protein level"/>
<comment type="function">
    <text evidence="1">Potently activates insect G protein-coupled receptor. It activates the ACP receptor (ACPR) from the mosquito A.aegypti (EC(50)=0.55 nM) with a potency comparable to that of the endogenous ligand. Has no activity on receptors of the closely related neuropeptides adipokinetic hormone and corazonin. In vivo, does not reveal any observable effects when injected into crickets (A.domesticus). Does not induce increase in intracellular calcium in mouse DRG neurons, suggesting that it does not induce pain.</text>
</comment>
<comment type="subcellular location">
    <subcellularLocation>
        <location evidence="1">Secreted</location>
    </subcellularLocation>
</comment>
<comment type="tissue specificity">
    <text evidence="4">Expressed by the venom secretory cell of the spine. The spine is a cuticular structure containing a single large nucleated venom-secreting cell at its base. It is an independent unit capable of producing, storing and injecting venom. On the back of D.vulnerans caterpillars, spines are grouped together by 50 to 100 to form scoli, of which there are eight in D.vulnerans.</text>
</comment>
<comment type="developmental stage">
    <text evidence="1">Only secreted by larvae. Adult moth do not have spines.</text>
</comment>
<comment type="miscellaneous">
    <text evidence="4">Extremely abundant peptide in the venom (almost one-quarter of all toxin-encoding transcripts, and the highest represented peptide by proteomics methods).</text>
</comment>
<comment type="similarity">
    <text evidence="3">Belongs to the limacoditoxin-1 (ACP-like) family.</text>
</comment>
<sequence length="35" mass="3952">MKKTFLPIFLVILLASYALANPQVTFSRDWGPGKK</sequence>
<dbReference type="GO" id="GO:0005576">
    <property type="term" value="C:extracellular region"/>
    <property type="evidence" value="ECO:0007669"/>
    <property type="project" value="UniProtKB-SubCell"/>
</dbReference>
<dbReference type="GO" id="GO:0005179">
    <property type="term" value="F:hormone activity"/>
    <property type="evidence" value="ECO:0007669"/>
    <property type="project" value="InterPro"/>
</dbReference>
<dbReference type="GO" id="GO:0090729">
    <property type="term" value="F:toxin activity"/>
    <property type="evidence" value="ECO:0007669"/>
    <property type="project" value="UniProtKB-KW"/>
</dbReference>
<dbReference type="InterPro" id="IPR002047">
    <property type="entry name" value="Adipokinetic_hormone_CS"/>
</dbReference>
<dbReference type="PROSITE" id="PS00256">
    <property type="entry name" value="AKH"/>
    <property type="match status" value="1"/>
</dbReference>
<name>Z11_DORVU</name>
<evidence type="ECO:0000269" key="1">
    <source>
    </source>
</evidence>
<evidence type="ECO:0000303" key="2">
    <source>
    </source>
</evidence>
<evidence type="ECO:0000305" key="3"/>
<evidence type="ECO:0000305" key="4">
    <source>
    </source>
</evidence>
<keyword id="KW-0027">Amidation</keyword>
<keyword id="KW-0903">Direct protein sequencing</keyword>
<keyword id="KW-1213">G-protein coupled receptor impairing toxin</keyword>
<keyword id="KW-0873">Pyrrolidone carboxylic acid</keyword>
<keyword id="KW-0964">Secreted</keyword>
<keyword id="KW-0732">Signal</keyword>
<keyword id="KW-0800">Toxin</keyword>
<organism>
    <name type="scientific">Doratifera vulnerans</name>
    <name type="common">Mottled cup moth</name>
    <dbReference type="NCBI Taxonomy" id="1372962"/>
    <lineage>
        <taxon>Eukaryota</taxon>
        <taxon>Metazoa</taxon>
        <taxon>Ecdysozoa</taxon>
        <taxon>Arthropoda</taxon>
        <taxon>Hexapoda</taxon>
        <taxon>Insecta</taxon>
        <taxon>Pterygota</taxon>
        <taxon>Neoptera</taxon>
        <taxon>Endopterygota</taxon>
        <taxon>Lepidoptera</taxon>
        <taxon>Glossata</taxon>
        <taxon>Ditrysia</taxon>
        <taxon>Zygaenoidea</taxon>
        <taxon>Limacodidae</taxon>
        <taxon>Doratifera</taxon>
    </lineage>
</organism>
<reference key="1">
    <citation type="journal article" date="2021" name="Proc. Natl. Acad. Sci. U.S.A.">
        <title>Production, composition, and mode of action of the painful defensive venom produced by a limacodid caterpillar, Doratifera vulnerans.</title>
        <authorList>
            <person name="Walker A.A."/>
            <person name="Robinson S.D."/>
            <person name="Paluzzi J.V."/>
            <person name="Merritt D.J."/>
            <person name="Nixon S.A."/>
            <person name="Schroeder C.I."/>
            <person name="Jin J."/>
            <person name="Goudarzi M.H."/>
            <person name="Kotze A.C."/>
            <person name="Dekan Z."/>
            <person name="Sombke A."/>
            <person name="Alewood P.F."/>
            <person name="Fry B.G."/>
            <person name="Epstein M.E."/>
            <person name="Vetter I."/>
            <person name="King G.F."/>
        </authorList>
    </citation>
    <scope>NUCLEOTIDE SEQUENCE [MRNA]</scope>
    <scope>PROTEIN SEQUENCE OF 23-32</scope>
    <scope>FUNCTION</scope>
    <scope>SUBCELLULAR LOCATION</scope>
    <scope>PYROGLUTAMATE FORMATION AT GLN-23</scope>
    <scope>AMIDATION AT PRO-32</scope>
    <scope>SYNTHESIS OF 23-32</scope>
    <scope>IDENTIFICATION BY MASS SPECTROMETRY</scope>
    <source>
        <tissue>Venom</tissue>
    </source>
</reference>